<organism>
    <name type="scientific">Bacillus subtilis (strain 168)</name>
    <dbReference type="NCBI Taxonomy" id="224308"/>
    <lineage>
        <taxon>Bacteria</taxon>
        <taxon>Bacillati</taxon>
        <taxon>Bacillota</taxon>
        <taxon>Bacilli</taxon>
        <taxon>Bacillales</taxon>
        <taxon>Bacillaceae</taxon>
        <taxon>Bacillus</taxon>
    </lineage>
</organism>
<protein>
    <recommendedName>
        <fullName>Protein csk22</fullName>
    </recommendedName>
</protein>
<keyword id="KW-1003">Cell membrane</keyword>
<keyword id="KW-0472">Membrane</keyword>
<keyword id="KW-1185">Reference proteome</keyword>
<keyword id="KW-0749">Sporulation</keyword>
<keyword id="KW-0812">Transmembrane</keyword>
<keyword id="KW-1133">Transmembrane helix</keyword>
<evidence type="ECO:0000255" key="1"/>
<evidence type="ECO:0000305" key="2"/>
<comment type="subcellular location">
    <subcellularLocation>
        <location evidence="2">Cell membrane</location>
        <topology evidence="2">Multi-pass membrane protein</topology>
    </subcellularLocation>
</comment>
<comment type="induction">
    <text>Transcription is activated at hour 4 of sporulation, requires sigma-K and is repressed by GerE. Maximal expression depends on SpoIIID.</text>
</comment>
<gene>
    <name type="primary">csk22</name>
    <name type="synonym">yobW</name>
    <name type="ordered locus">BSU19110</name>
</gene>
<dbReference type="EMBL" id="U70042">
    <property type="protein sequence ID" value="AAB41590.1"/>
    <property type="molecule type" value="Genomic_DNA"/>
</dbReference>
<dbReference type="EMBL" id="AF027868">
    <property type="protein sequence ID" value="AAB84432.1"/>
    <property type="molecule type" value="Genomic_DNA"/>
</dbReference>
<dbReference type="EMBL" id="AL009126">
    <property type="protein sequence ID" value="CAB13803.1"/>
    <property type="molecule type" value="Genomic_DNA"/>
</dbReference>
<dbReference type="PIR" id="E69900">
    <property type="entry name" value="E69900"/>
</dbReference>
<dbReference type="RefSeq" id="NP_389792.1">
    <property type="nucleotide sequence ID" value="NC_000964.3"/>
</dbReference>
<dbReference type="RefSeq" id="WP_004399253.1">
    <property type="nucleotide sequence ID" value="NZ_OZ025638.1"/>
</dbReference>
<dbReference type="FunCoup" id="P94497">
    <property type="interactions" value="7"/>
</dbReference>
<dbReference type="STRING" id="224308.BSU19110"/>
<dbReference type="PaxDb" id="224308-BSU19110"/>
<dbReference type="EnsemblBacteria" id="CAB13803">
    <property type="protein sequence ID" value="CAB13803"/>
    <property type="gene ID" value="BSU_19110"/>
</dbReference>
<dbReference type="GeneID" id="939656"/>
<dbReference type="KEGG" id="bsu:BSU19110"/>
<dbReference type="PATRIC" id="fig|224308.179.peg.2089"/>
<dbReference type="eggNOG" id="ENOG5032UY8">
    <property type="taxonomic scope" value="Bacteria"/>
</dbReference>
<dbReference type="InParanoid" id="P94497"/>
<dbReference type="OrthoDB" id="2595090at2"/>
<dbReference type="BioCyc" id="BSUB:BSU19110-MONOMER"/>
<dbReference type="Proteomes" id="UP000001570">
    <property type="component" value="Chromosome"/>
</dbReference>
<dbReference type="GO" id="GO:0005886">
    <property type="term" value="C:plasma membrane"/>
    <property type="evidence" value="ECO:0007669"/>
    <property type="project" value="UniProtKB-SubCell"/>
</dbReference>
<dbReference type="GO" id="GO:0030435">
    <property type="term" value="P:sporulation resulting in formation of a cellular spore"/>
    <property type="evidence" value="ECO:0007669"/>
    <property type="project" value="UniProtKB-KW"/>
</dbReference>
<feature type="chain" id="PRO_0000079401" description="Protein csk22">
    <location>
        <begin position="1"/>
        <end position="181"/>
    </location>
</feature>
<feature type="transmembrane region" description="Helical" evidence="1">
    <location>
        <begin position="5"/>
        <end position="22"/>
    </location>
</feature>
<feature type="transmembrane region" description="Helical" evidence="1">
    <location>
        <begin position="35"/>
        <end position="57"/>
    </location>
</feature>
<feature type="transmembrane region" description="Helical" evidence="1">
    <location>
        <begin position="61"/>
        <end position="78"/>
    </location>
</feature>
<feature type="transmembrane region" description="Helical" evidence="1">
    <location>
        <begin position="91"/>
        <end position="113"/>
    </location>
</feature>
<feature type="transmembrane region" description="Helical" evidence="1">
    <location>
        <begin position="140"/>
        <end position="162"/>
    </location>
</feature>
<name>CSK22_BACSU</name>
<proteinExistence type="evidence at transcript level"/>
<accession>P94497</accession>
<reference key="1">
    <citation type="journal article" date="1997" name="J. Bacteriol.">
        <title>cse15, cse60, and csk22 are new members of mother-cell-specific sporulation regulons in Bacillus subtilis.</title>
        <authorList>
            <person name="Henriques A.O."/>
            <person name="Bryan E.M."/>
            <person name="Beall B.W."/>
            <person name="Moran C.P. Jr."/>
        </authorList>
    </citation>
    <scope>NUCLEOTIDE SEQUENCE [GENOMIC DNA]</scope>
    <scope>REGULATION</scope>
    <source>
        <strain>168</strain>
    </source>
</reference>
<reference key="2">
    <citation type="submission" date="1997-11" db="EMBL/GenBank/DDBJ databases">
        <title>Sequence analysis of the Bacillus subtilis chromosome region between the terC and odhAB loci cloned in a yeast artificial chromosome.</title>
        <authorList>
            <person name="Lapidus A."/>
            <person name="Galleron N."/>
            <person name="Sorokin A."/>
            <person name="Ehrlich S.D."/>
        </authorList>
    </citation>
    <scope>NUCLEOTIDE SEQUENCE [GENOMIC DNA]</scope>
</reference>
<reference key="3">
    <citation type="journal article" date="1997" name="Nature">
        <title>The complete genome sequence of the Gram-positive bacterium Bacillus subtilis.</title>
        <authorList>
            <person name="Kunst F."/>
            <person name="Ogasawara N."/>
            <person name="Moszer I."/>
            <person name="Albertini A.M."/>
            <person name="Alloni G."/>
            <person name="Azevedo V."/>
            <person name="Bertero M.G."/>
            <person name="Bessieres P."/>
            <person name="Bolotin A."/>
            <person name="Borchert S."/>
            <person name="Borriss R."/>
            <person name="Boursier L."/>
            <person name="Brans A."/>
            <person name="Braun M."/>
            <person name="Brignell S.C."/>
            <person name="Bron S."/>
            <person name="Brouillet S."/>
            <person name="Bruschi C.V."/>
            <person name="Caldwell B."/>
            <person name="Capuano V."/>
            <person name="Carter N.M."/>
            <person name="Choi S.-K."/>
            <person name="Codani J.-J."/>
            <person name="Connerton I.F."/>
            <person name="Cummings N.J."/>
            <person name="Daniel R.A."/>
            <person name="Denizot F."/>
            <person name="Devine K.M."/>
            <person name="Duesterhoeft A."/>
            <person name="Ehrlich S.D."/>
            <person name="Emmerson P.T."/>
            <person name="Entian K.-D."/>
            <person name="Errington J."/>
            <person name="Fabret C."/>
            <person name="Ferrari E."/>
            <person name="Foulger D."/>
            <person name="Fritz C."/>
            <person name="Fujita M."/>
            <person name="Fujita Y."/>
            <person name="Fuma S."/>
            <person name="Galizzi A."/>
            <person name="Galleron N."/>
            <person name="Ghim S.-Y."/>
            <person name="Glaser P."/>
            <person name="Goffeau A."/>
            <person name="Golightly E.J."/>
            <person name="Grandi G."/>
            <person name="Guiseppi G."/>
            <person name="Guy B.J."/>
            <person name="Haga K."/>
            <person name="Haiech J."/>
            <person name="Harwood C.R."/>
            <person name="Henaut A."/>
            <person name="Hilbert H."/>
            <person name="Holsappel S."/>
            <person name="Hosono S."/>
            <person name="Hullo M.-F."/>
            <person name="Itaya M."/>
            <person name="Jones L.-M."/>
            <person name="Joris B."/>
            <person name="Karamata D."/>
            <person name="Kasahara Y."/>
            <person name="Klaerr-Blanchard M."/>
            <person name="Klein C."/>
            <person name="Kobayashi Y."/>
            <person name="Koetter P."/>
            <person name="Koningstein G."/>
            <person name="Krogh S."/>
            <person name="Kumano M."/>
            <person name="Kurita K."/>
            <person name="Lapidus A."/>
            <person name="Lardinois S."/>
            <person name="Lauber J."/>
            <person name="Lazarevic V."/>
            <person name="Lee S.-M."/>
            <person name="Levine A."/>
            <person name="Liu H."/>
            <person name="Masuda S."/>
            <person name="Mauel C."/>
            <person name="Medigue C."/>
            <person name="Medina N."/>
            <person name="Mellado R.P."/>
            <person name="Mizuno M."/>
            <person name="Moestl D."/>
            <person name="Nakai S."/>
            <person name="Noback M."/>
            <person name="Noone D."/>
            <person name="O'Reilly M."/>
            <person name="Ogawa K."/>
            <person name="Ogiwara A."/>
            <person name="Oudega B."/>
            <person name="Park S.-H."/>
            <person name="Parro V."/>
            <person name="Pohl T.M."/>
            <person name="Portetelle D."/>
            <person name="Porwollik S."/>
            <person name="Prescott A.M."/>
            <person name="Presecan E."/>
            <person name="Pujic P."/>
            <person name="Purnelle B."/>
            <person name="Rapoport G."/>
            <person name="Rey M."/>
            <person name="Reynolds S."/>
            <person name="Rieger M."/>
            <person name="Rivolta C."/>
            <person name="Rocha E."/>
            <person name="Roche B."/>
            <person name="Rose M."/>
            <person name="Sadaie Y."/>
            <person name="Sato T."/>
            <person name="Scanlan E."/>
            <person name="Schleich S."/>
            <person name="Schroeter R."/>
            <person name="Scoffone F."/>
            <person name="Sekiguchi J."/>
            <person name="Sekowska A."/>
            <person name="Seror S.J."/>
            <person name="Serror P."/>
            <person name="Shin B.-S."/>
            <person name="Soldo B."/>
            <person name="Sorokin A."/>
            <person name="Tacconi E."/>
            <person name="Takagi T."/>
            <person name="Takahashi H."/>
            <person name="Takemaru K."/>
            <person name="Takeuchi M."/>
            <person name="Tamakoshi A."/>
            <person name="Tanaka T."/>
            <person name="Terpstra P."/>
            <person name="Tognoni A."/>
            <person name="Tosato V."/>
            <person name="Uchiyama S."/>
            <person name="Vandenbol M."/>
            <person name="Vannier F."/>
            <person name="Vassarotti A."/>
            <person name="Viari A."/>
            <person name="Wambutt R."/>
            <person name="Wedler E."/>
            <person name="Wedler H."/>
            <person name="Weitzenegger T."/>
            <person name="Winters P."/>
            <person name="Wipat A."/>
            <person name="Yamamoto H."/>
            <person name="Yamane K."/>
            <person name="Yasumoto K."/>
            <person name="Yata K."/>
            <person name="Yoshida K."/>
            <person name="Yoshikawa H.-F."/>
            <person name="Zumstein E."/>
            <person name="Yoshikawa H."/>
            <person name="Danchin A."/>
        </authorList>
    </citation>
    <scope>NUCLEOTIDE SEQUENCE [LARGE SCALE GENOMIC DNA]</scope>
    <source>
        <strain>168</strain>
    </source>
</reference>
<sequence>MHLTLQSVYPAIIIIFFLYKKIKRSIGYQPLKPRWLFTRIILFSLFAFGLSIFSAIHPFLYGYLILGILGGWLLVFFAKKNISFEKRRGKIYFRTHIWVEVILLTLFLSRFLYRVTELYLTSPDLNRLGSYSQSIGTDPLTIGVCFLIAVYYIGFSSFIIKLSRNELEQHEYNKEKDILAR</sequence>